<proteinExistence type="inferred from homology"/>
<accession>A8EXE9</accession>
<evidence type="ECO:0000255" key="1">
    <source>
        <dbReference type="HAMAP-Rule" id="MF_00041"/>
    </source>
</evidence>
<dbReference type="EC" id="6.1.1.16" evidence="1"/>
<dbReference type="EMBL" id="CP000409">
    <property type="protein sequence ID" value="ABV73032.1"/>
    <property type="molecule type" value="Genomic_DNA"/>
</dbReference>
<dbReference type="RefSeq" id="WP_012148233.1">
    <property type="nucleotide sequence ID" value="NC_009879.1"/>
</dbReference>
<dbReference type="SMR" id="A8EXE9"/>
<dbReference type="STRING" id="293613.A1E_00410"/>
<dbReference type="KEGG" id="rcm:A1E_00410"/>
<dbReference type="eggNOG" id="COG0215">
    <property type="taxonomic scope" value="Bacteria"/>
</dbReference>
<dbReference type="HOGENOM" id="CLU_013528_0_1_5"/>
<dbReference type="Proteomes" id="UP000007056">
    <property type="component" value="Chromosome"/>
</dbReference>
<dbReference type="GO" id="GO:0005829">
    <property type="term" value="C:cytosol"/>
    <property type="evidence" value="ECO:0007669"/>
    <property type="project" value="TreeGrafter"/>
</dbReference>
<dbReference type="GO" id="GO:0005524">
    <property type="term" value="F:ATP binding"/>
    <property type="evidence" value="ECO:0007669"/>
    <property type="project" value="UniProtKB-UniRule"/>
</dbReference>
<dbReference type="GO" id="GO:0004817">
    <property type="term" value="F:cysteine-tRNA ligase activity"/>
    <property type="evidence" value="ECO:0007669"/>
    <property type="project" value="UniProtKB-UniRule"/>
</dbReference>
<dbReference type="GO" id="GO:0008270">
    <property type="term" value="F:zinc ion binding"/>
    <property type="evidence" value="ECO:0007669"/>
    <property type="project" value="UniProtKB-UniRule"/>
</dbReference>
<dbReference type="GO" id="GO:0006423">
    <property type="term" value="P:cysteinyl-tRNA aminoacylation"/>
    <property type="evidence" value="ECO:0007669"/>
    <property type="project" value="UniProtKB-UniRule"/>
</dbReference>
<dbReference type="CDD" id="cd00672">
    <property type="entry name" value="CysRS_core"/>
    <property type="match status" value="1"/>
</dbReference>
<dbReference type="FunFam" id="3.40.50.620:FF:000068">
    <property type="entry name" value="Cysteine--tRNA ligase"/>
    <property type="match status" value="1"/>
</dbReference>
<dbReference type="Gene3D" id="1.20.120.1910">
    <property type="entry name" value="Cysteine-tRNA ligase, C-terminal anti-codon recognition domain"/>
    <property type="match status" value="1"/>
</dbReference>
<dbReference type="Gene3D" id="3.40.50.620">
    <property type="entry name" value="HUPs"/>
    <property type="match status" value="1"/>
</dbReference>
<dbReference type="HAMAP" id="MF_00041">
    <property type="entry name" value="Cys_tRNA_synth"/>
    <property type="match status" value="1"/>
</dbReference>
<dbReference type="InterPro" id="IPR015803">
    <property type="entry name" value="Cys-tRNA-ligase"/>
</dbReference>
<dbReference type="InterPro" id="IPR015273">
    <property type="entry name" value="Cys-tRNA-synt_Ia_DALR"/>
</dbReference>
<dbReference type="InterPro" id="IPR024909">
    <property type="entry name" value="Cys-tRNA/MSH_ligase"/>
</dbReference>
<dbReference type="InterPro" id="IPR014729">
    <property type="entry name" value="Rossmann-like_a/b/a_fold"/>
</dbReference>
<dbReference type="InterPro" id="IPR032678">
    <property type="entry name" value="tRNA-synt_1_cat_dom"/>
</dbReference>
<dbReference type="InterPro" id="IPR009080">
    <property type="entry name" value="tRNAsynth_Ia_anticodon-bd"/>
</dbReference>
<dbReference type="NCBIfam" id="TIGR00435">
    <property type="entry name" value="cysS"/>
    <property type="match status" value="1"/>
</dbReference>
<dbReference type="PANTHER" id="PTHR10890:SF3">
    <property type="entry name" value="CYSTEINE--TRNA LIGASE, CYTOPLASMIC"/>
    <property type="match status" value="1"/>
</dbReference>
<dbReference type="PANTHER" id="PTHR10890">
    <property type="entry name" value="CYSTEINYL-TRNA SYNTHETASE"/>
    <property type="match status" value="1"/>
</dbReference>
<dbReference type="Pfam" id="PF01406">
    <property type="entry name" value="tRNA-synt_1e"/>
    <property type="match status" value="1"/>
</dbReference>
<dbReference type="PRINTS" id="PR00983">
    <property type="entry name" value="TRNASYNTHCYS"/>
</dbReference>
<dbReference type="SMART" id="SM00840">
    <property type="entry name" value="DALR_2"/>
    <property type="match status" value="1"/>
</dbReference>
<dbReference type="SUPFAM" id="SSF47323">
    <property type="entry name" value="Anticodon-binding domain of a subclass of class I aminoacyl-tRNA synthetases"/>
    <property type="match status" value="1"/>
</dbReference>
<dbReference type="SUPFAM" id="SSF52374">
    <property type="entry name" value="Nucleotidylyl transferase"/>
    <property type="match status" value="1"/>
</dbReference>
<feature type="chain" id="PRO_0000332888" description="Cysteine--tRNA ligase">
    <location>
        <begin position="1"/>
        <end position="459"/>
    </location>
</feature>
<feature type="short sequence motif" description="'HIGH' region">
    <location>
        <begin position="33"/>
        <end position="43"/>
    </location>
</feature>
<feature type="short sequence motif" description="'KMSKS' region">
    <location>
        <begin position="274"/>
        <end position="278"/>
    </location>
</feature>
<feature type="binding site" evidence="1">
    <location>
        <position position="31"/>
    </location>
    <ligand>
        <name>Zn(2+)</name>
        <dbReference type="ChEBI" id="CHEBI:29105"/>
    </ligand>
</feature>
<feature type="binding site" evidence="1">
    <location>
        <position position="216"/>
    </location>
    <ligand>
        <name>Zn(2+)</name>
        <dbReference type="ChEBI" id="CHEBI:29105"/>
    </ligand>
</feature>
<feature type="binding site" evidence="1">
    <location>
        <position position="241"/>
    </location>
    <ligand>
        <name>Zn(2+)</name>
        <dbReference type="ChEBI" id="CHEBI:29105"/>
    </ligand>
</feature>
<feature type="binding site" evidence="1">
    <location>
        <position position="245"/>
    </location>
    <ligand>
        <name>Zn(2+)</name>
        <dbReference type="ChEBI" id="CHEBI:29105"/>
    </ligand>
</feature>
<feature type="binding site" evidence="1">
    <location>
        <position position="277"/>
    </location>
    <ligand>
        <name>ATP</name>
        <dbReference type="ChEBI" id="CHEBI:30616"/>
    </ligand>
</feature>
<keyword id="KW-0030">Aminoacyl-tRNA synthetase</keyword>
<keyword id="KW-0067">ATP-binding</keyword>
<keyword id="KW-0963">Cytoplasm</keyword>
<keyword id="KW-0436">Ligase</keyword>
<keyword id="KW-0479">Metal-binding</keyword>
<keyword id="KW-0547">Nucleotide-binding</keyword>
<keyword id="KW-0648">Protein biosynthesis</keyword>
<keyword id="KW-0862">Zinc</keyword>
<comment type="catalytic activity">
    <reaction evidence="1">
        <text>tRNA(Cys) + L-cysteine + ATP = L-cysteinyl-tRNA(Cys) + AMP + diphosphate</text>
        <dbReference type="Rhea" id="RHEA:17773"/>
        <dbReference type="Rhea" id="RHEA-COMP:9661"/>
        <dbReference type="Rhea" id="RHEA-COMP:9679"/>
        <dbReference type="ChEBI" id="CHEBI:30616"/>
        <dbReference type="ChEBI" id="CHEBI:33019"/>
        <dbReference type="ChEBI" id="CHEBI:35235"/>
        <dbReference type="ChEBI" id="CHEBI:78442"/>
        <dbReference type="ChEBI" id="CHEBI:78517"/>
        <dbReference type="ChEBI" id="CHEBI:456215"/>
        <dbReference type="EC" id="6.1.1.16"/>
    </reaction>
</comment>
<comment type="cofactor">
    <cofactor evidence="1">
        <name>Zn(2+)</name>
        <dbReference type="ChEBI" id="CHEBI:29105"/>
    </cofactor>
    <text evidence="1">Binds 1 zinc ion per subunit.</text>
</comment>
<comment type="subunit">
    <text evidence="1">Monomer.</text>
</comment>
<comment type="subcellular location">
    <subcellularLocation>
        <location evidence="1">Cytoplasm</location>
    </subcellularLocation>
</comment>
<comment type="similarity">
    <text evidence="1">Belongs to the class-I aminoacyl-tRNA synthetase family.</text>
</comment>
<protein>
    <recommendedName>
        <fullName evidence="1">Cysteine--tRNA ligase</fullName>
        <ecNumber evidence="1">6.1.1.16</ecNumber>
    </recommendedName>
    <alternativeName>
        <fullName evidence="1">Cysteinyl-tRNA synthetase</fullName>
        <shortName evidence="1">CysRS</shortName>
    </alternativeName>
</protein>
<sequence>MQIQFHLYNTLTRTKELFRPQDQANVKMYVCGPTVYDNPHIGNSRSAAVYDLLYRILIKIFGSTAVKYIRNITDVDDKIIDRAELLGSTINELTDKVTQEFHINMEYLGCKLPSIEPKATEHIDIMIEIIERLIAKKHAYIADKHVYFNVLSAPNYTELSNRNLEEMFEGVRVENSKTKKHPQDFVLWKPAKPNESANMNFDSPWGLGRPGWHIECSAMSYKYLGENFDIHGGGADLIFPHHTNEIAQSRCAFPSSTYAKYWVHHGFLTVNGEKMSKSLGNFITVRDLMDKEISGEVIRLFLLSSHYRRPLDYNDKAIEDAKKTLDYWYRAIVNINLQKIDIIPNDFMQSLLDDMNTPLAVKIINDYARGVFTSTTEEEKKFNASNLITCANFIGLMNKTPHEWFNSGVNELYINELVNKRLEAKKQKNWLLADQIRNQLLEQQIVLEDKPDGTIWRKG</sequence>
<gene>
    <name evidence="1" type="primary">cysS</name>
    <name type="ordered locus">A1E_00410</name>
</gene>
<reference key="1">
    <citation type="submission" date="2007-09" db="EMBL/GenBank/DDBJ databases">
        <title>Complete genome sequence of Rickettsia canadensis.</title>
        <authorList>
            <person name="Madan A."/>
            <person name="Fahey J."/>
            <person name="Helton E."/>
            <person name="Ketteman M."/>
            <person name="Madan A."/>
            <person name="Rodrigues S."/>
            <person name="Sanchez A."/>
            <person name="Whiting M."/>
            <person name="Dasch G."/>
            <person name="Eremeeva M."/>
        </authorList>
    </citation>
    <scope>NUCLEOTIDE SEQUENCE [LARGE SCALE GENOMIC DNA]</scope>
    <source>
        <strain>McKiel</strain>
    </source>
</reference>
<name>SYC_RICCK</name>
<organism>
    <name type="scientific">Rickettsia canadensis (strain McKiel)</name>
    <dbReference type="NCBI Taxonomy" id="293613"/>
    <lineage>
        <taxon>Bacteria</taxon>
        <taxon>Pseudomonadati</taxon>
        <taxon>Pseudomonadota</taxon>
        <taxon>Alphaproteobacteria</taxon>
        <taxon>Rickettsiales</taxon>
        <taxon>Rickettsiaceae</taxon>
        <taxon>Rickettsieae</taxon>
        <taxon>Rickettsia</taxon>
        <taxon>belli group</taxon>
    </lineage>
</organism>